<organism>
    <name type="scientific">Brucella canis (strain ATCC 23365 / NCTC 10854 / RM-666)</name>
    <dbReference type="NCBI Taxonomy" id="483179"/>
    <lineage>
        <taxon>Bacteria</taxon>
        <taxon>Pseudomonadati</taxon>
        <taxon>Pseudomonadota</taxon>
        <taxon>Alphaproteobacteria</taxon>
        <taxon>Hyphomicrobiales</taxon>
        <taxon>Brucellaceae</taxon>
        <taxon>Brucella/Ochrobactrum group</taxon>
        <taxon>Brucella</taxon>
    </lineage>
</organism>
<feature type="chain" id="PRO_1000074516" description="UDP-N-acetylenolpyruvoylglucosamine reductase">
    <location>
        <begin position="1"/>
        <end position="322"/>
    </location>
</feature>
<feature type="domain" description="FAD-binding PCMH-type" evidence="1">
    <location>
        <begin position="36"/>
        <end position="202"/>
    </location>
</feature>
<feature type="active site" evidence="1">
    <location>
        <position position="182"/>
    </location>
</feature>
<feature type="active site" description="Proton donor" evidence="1">
    <location>
        <position position="231"/>
    </location>
</feature>
<feature type="active site" evidence="1">
    <location>
        <position position="301"/>
    </location>
</feature>
<dbReference type="EC" id="1.3.1.98" evidence="1"/>
<dbReference type="EMBL" id="CP000872">
    <property type="protein sequence ID" value="ABX62493.1"/>
    <property type="molecule type" value="Genomic_DNA"/>
</dbReference>
<dbReference type="RefSeq" id="WP_004691594.1">
    <property type="nucleotide sequence ID" value="NC_010103.1"/>
</dbReference>
<dbReference type="SMR" id="A9M688"/>
<dbReference type="GeneID" id="55591081"/>
<dbReference type="KEGG" id="bcs:BCAN_A1462"/>
<dbReference type="HOGENOM" id="CLU_035304_1_0_5"/>
<dbReference type="UniPathway" id="UPA00219"/>
<dbReference type="Proteomes" id="UP000001385">
    <property type="component" value="Chromosome I"/>
</dbReference>
<dbReference type="GO" id="GO:0005829">
    <property type="term" value="C:cytosol"/>
    <property type="evidence" value="ECO:0007669"/>
    <property type="project" value="TreeGrafter"/>
</dbReference>
<dbReference type="GO" id="GO:0071949">
    <property type="term" value="F:FAD binding"/>
    <property type="evidence" value="ECO:0007669"/>
    <property type="project" value="InterPro"/>
</dbReference>
<dbReference type="GO" id="GO:0008762">
    <property type="term" value="F:UDP-N-acetylmuramate dehydrogenase activity"/>
    <property type="evidence" value="ECO:0007669"/>
    <property type="project" value="UniProtKB-UniRule"/>
</dbReference>
<dbReference type="GO" id="GO:0051301">
    <property type="term" value="P:cell division"/>
    <property type="evidence" value="ECO:0007669"/>
    <property type="project" value="UniProtKB-KW"/>
</dbReference>
<dbReference type="GO" id="GO:0071555">
    <property type="term" value="P:cell wall organization"/>
    <property type="evidence" value="ECO:0007669"/>
    <property type="project" value="UniProtKB-KW"/>
</dbReference>
<dbReference type="GO" id="GO:0009252">
    <property type="term" value="P:peptidoglycan biosynthetic process"/>
    <property type="evidence" value="ECO:0007669"/>
    <property type="project" value="UniProtKB-UniRule"/>
</dbReference>
<dbReference type="GO" id="GO:0008360">
    <property type="term" value="P:regulation of cell shape"/>
    <property type="evidence" value="ECO:0007669"/>
    <property type="project" value="UniProtKB-KW"/>
</dbReference>
<dbReference type="Gene3D" id="3.30.465.10">
    <property type="match status" value="1"/>
</dbReference>
<dbReference type="Gene3D" id="3.90.78.10">
    <property type="entry name" value="UDP-N-acetylenolpyruvoylglucosamine reductase, C-terminal domain"/>
    <property type="match status" value="1"/>
</dbReference>
<dbReference type="Gene3D" id="3.30.43.10">
    <property type="entry name" value="Uridine Diphospho-n-acetylenolpyruvylglucosamine Reductase, domain 2"/>
    <property type="match status" value="1"/>
</dbReference>
<dbReference type="HAMAP" id="MF_00037">
    <property type="entry name" value="MurB"/>
    <property type="match status" value="1"/>
</dbReference>
<dbReference type="InterPro" id="IPR016166">
    <property type="entry name" value="FAD-bd_PCMH"/>
</dbReference>
<dbReference type="InterPro" id="IPR036318">
    <property type="entry name" value="FAD-bd_PCMH-like_sf"/>
</dbReference>
<dbReference type="InterPro" id="IPR016167">
    <property type="entry name" value="FAD-bd_PCMH_sub1"/>
</dbReference>
<dbReference type="InterPro" id="IPR016169">
    <property type="entry name" value="FAD-bd_PCMH_sub2"/>
</dbReference>
<dbReference type="InterPro" id="IPR003170">
    <property type="entry name" value="MurB"/>
</dbReference>
<dbReference type="InterPro" id="IPR011601">
    <property type="entry name" value="MurB_C"/>
</dbReference>
<dbReference type="InterPro" id="IPR036635">
    <property type="entry name" value="MurB_C_sf"/>
</dbReference>
<dbReference type="InterPro" id="IPR006094">
    <property type="entry name" value="Oxid_FAD_bind_N"/>
</dbReference>
<dbReference type="NCBIfam" id="TIGR00179">
    <property type="entry name" value="murB"/>
    <property type="match status" value="1"/>
</dbReference>
<dbReference type="NCBIfam" id="NF010480">
    <property type="entry name" value="PRK13905.1"/>
    <property type="match status" value="1"/>
</dbReference>
<dbReference type="PANTHER" id="PTHR21071">
    <property type="entry name" value="UDP-N-ACETYLENOLPYRUVOYLGLUCOSAMINE REDUCTASE"/>
    <property type="match status" value="1"/>
</dbReference>
<dbReference type="PANTHER" id="PTHR21071:SF4">
    <property type="entry name" value="UDP-N-ACETYLENOLPYRUVOYLGLUCOSAMINE REDUCTASE"/>
    <property type="match status" value="1"/>
</dbReference>
<dbReference type="Pfam" id="PF01565">
    <property type="entry name" value="FAD_binding_4"/>
    <property type="match status" value="1"/>
</dbReference>
<dbReference type="Pfam" id="PF02873">
    <property type="entry name" value="MurB_C"/>
    <property type="match status" value="1"/>
</dbReference>
<dbReference type="SUPFAM" id="SSF56176">
    <property type="entry name" value="FAD-binding/transporter-associated domain-like"/>
    <property type="match status" value="1"/>
</dbReference>
<dbReference type="SUPFAM" id="SSF56194">
    <property type="entry name" value="Uridine diphospho-N-Acetylenolpyruvylglucosamine reductase, MurB, C-terminal domain"/>
    <property type="match status" value="1"/>
</dbReference>
<dbReference type="PROSITE" id="PS51387">
    <property type="entry name" value="FAD_PCMH"/>
    <property type="match status" value="1"/>
</dbReference>
<accession>A9M688</accession>
<name>MURB_BRUC2</name>
<reference key="1">
    <citation type="submission" date="2007-10" db="EMBL/GenBank/DDBJ databases">
        <title>Brucella canis ATCC 23365 whole genome shotgun sequencing project.</title>
        <authorList>
            <person name="Setubal J.C."/>
            <person name="Bowns C."/>
            <person name="Boyle S."/>
            <person name="Crasta O.R."/>
            <person name="Czar M.J."/>
            <person name="Dharmanolla C."/>
            <person name="Gillespie J.J."/>
            <person name="Kenyon R.W."/>
            <person name="Lu J."/>
            <person name="Mane S."/>
            <person name="Mohapatra S."/>
            <person name="Nagrani S."/>
            <person name="Purkayastha A."/>
            <person name="Rajasimha H.K."/>
            <person name="Shallom J.M."/>
            <person name="Shallom S."/>
            <person name="Shukla M."/>
            <person name="Snyder E.E."/>
            <person name="Sobral B.W."/>
            <person name="Wattam A.R."/>
            <person name="Will R."/>
            <person name="Williams K."/>
            <person name="Yoo H."/>
            <person name="Bruce D."/>
            <person name="Detter C."/>
            <person name="Munk C."/>
            <person name="Brettin T.S."/>
        </authorList>
    </citation>
    <scope>NUCLEOTIDE SEQUENCE [LARGE SCALE GENOMIC DNA]</scope>
    <source>
        <strain>ATCC 23365 / NCTC 10854 / RM-666</strain>
    </source>
</reference>
<keyword id="KW-0131">Cell cycle</keyword>
<keyword id="KW-0132">Cell division</keyword>
<keyword id="KW-0133">Cell shape</keyword>
<keyword id="KW-0961">Cell wall biogenesis/degradation</keyword>
<keyword id="KW-0963">Cytoplasm</keyword>
<keyword id="KW-0274">FAD</keyword>
<keyword id="KW-0285">Flavoprotein</keyword>
<keyword id="KW-0521">NADP</keyword>
<keyword id="KW-0560">Oxidoreductase</keyword>
<keyword id="KW-0573">Peptidoglycan synthesis</keyword>
<keyword id="KW-1185">Reference proteome</keyword>
<protein>
    <recommendedName>
        <fullName evidence="1">UDP-N-acetylenolpyruvoylglucosamine reductase</fullName>
        <ecNumber evidence="1">1.3.1.98</ecNumber>
    </recommendedName>
    <alternativeName>
        <fullName evidence="1">UDP-N-acetylmuramate dehydrogenase</fullName>
    </alternativeName>
</protein>
<evidence type="ECO:0000255" key="1">
    <source>
        <dbReference type="HAMAP-Rule" id="MF_00037"/>
    </source>
</evidence>
<proteinExistence type="inferred from homology"/>
<comment type="function">
    <text evidence="1">Cell wall formation.</text>
</comment>
<comment type="catalytic activity">
    <reaction evidence="1">
        <text>UDP-N-acetyl-alpha-D-muramate + NADP(+) = UDP-N-acetyl-3-O-(1-carboxyvinyl)-alpha-D-glucosamine + NADPH + H(+)</text>
        <dbReference type="Rhea" id="RHEA:12248"/>
        <dbReference type="ChEBI" id="CHEBI:15378"/>
        <dbReference type="ChEBI" id="CHEBI:57783"/>
        <dbReference type="ChEBI" id="CHEBI:58349"/>
        <dbReference type="ChEBI" id="CHEBI:68483"/>
        <dbReference type="ChEBI" id="CHEBI:70757"/>
        <dbReference type="EC" id="1.3.1.98"/>
    </reaction>
</comment>
<comment type="cofactor">
    <cofactor evidence="1">
        <name>FAD</name>
        <dbReference type="ChEBI" id="CHEBI:57692"/>
    </cofactor>
</comment>
<comment type="pathway">
    <text evidence="1">Cell wall biogenesis; peptidoglycan biosynthesis.</text>
</comment>
<comment type="subcellular location">
    <subcellularLocation>
        <location evidence="1">Cytoplasm</location>
    </subcellularLocation>
</comment>
<comment type="similarity">
    <text evidence="1">Belongs to the MurB family.</text>
</comment>
<gene>
    <name evidence="1" type="primary">murB</name>
    <name type="ordered locus">BCAN_A1462</name>
</gene>
<sequence length="322" mass="34963">MMESGEALLKKLDGRLSGLRGRLTPDTGMDKITWFRAGGPAQVLFQPSDEEDLSAFLKAVPEEIPLLVVGIGSNLLVRDGGVPGFVVRLSAKGFGEVEQVCDTQLRAGAAAPDKRVAAAALEAGLADFHFYHGIPGGIGGALRMNAGANGVETRERVVEVRALDRKGEVHVLSNADMGYAYRHSSASPDLIFTSVLFEGVPGERDDIRRAMDEVQHHRETVQPVREKTGGSTFKNPEGTSAWKEIDKAGCRGLRVGGAQMSEMHCNFMINTGNATGHDLETLGETVRARVFENSGIRLHWEIKRLGLFREGEQIEEFLGKII</sequence>